<proteinExistence type="evidence at transcript level"/>
<evidence type="ECO:0000250" key="1">
    <source>
        <dbReference type="UniProtKB" id="O15037"/>
    </source>
</evidence>
<evidence type="ECO:0000255" key="2"/>
<evidence type="ECO:0000256" key="3">
    <source>
        <dbReference type="SAM" id="MobiDB-lite"/>
    </source>
</evidence>
<evidence type="ECO:0000305" key="4"/>
<dbReference type="EMBL" id="AK032037">
    <property type="protein sequence ID" value="BAC27665.1"/>
    <property type="status" value="ALT_FRAME"/>
    <property type="molecule type" value="mRNA"/>
</dbReference>
<dbReference type="EMBL" id="AK033704">
    <property type="protein sequence ID" value="BAC28436.1"/>
    <property type="molecule type" value="mRNA"/>
</dbReference>
<dbReference type="EMBL" id="AK047955">
    <property type="protein sequence ID" value="BAC33200.1"/>
    <property type="molecule type" value="mRNA"/>
</dbReference>
<dbReference type="EMBL" id="AK122247">
    <property type="protein sequence ID" value="BAC65529.1"/>
    <property type="status" value="ALT_INIT"/>
    <property type="molecule type" value="Transcribed_RNA"/>
</dbReference>
<dbReference type="EMBL" id="BC116260">
    <property type="protein sequence ID" value="AAI16261.1"/>
    <property type="molecule type" value="mRNA"/>
</dbReference>
<dbReference type="EMBL" id="BC116261">
    <property type="protein sequence ID" value="AAI16262.1"/>
    <property type="molecule type" value="mRNA"/>
</dbReference>
<dbReference type="CCDS" id="CCDS27134.1"/>
<dbReference type="RefSeq" id="NP_081419.1">
    <property type="nucleotide sequence ID" value="NM_027143.3"/>
</dbReference>
<dbReference type="SMR" id="Q80U38"/>
<dbReference type="BioGRID" id="230106">
    <property type="interactions" value="1"/>
</dbReference>
<dbReference type="FunCoup" id="Q80U38">
    <property type="interactions" value="1835"/>
</dbReference>
<dbReference type="STRING" id="10090.ENSMUSP00000022831"/>
<dbReference type="iPTMnet" id="Q80U38"/>
<dbReference type="PhosphoSitePlus" id="Q80U38"/>
<dbReference type="PaxDb" id="10090-ENSMUSP00000022831"/>
<dbReference type="PeptideAtlas" id="Q80U38"/>
<dbReference type="ProteomicsDB" id="269298"/>
<dbReference type="Pumba" id="Q80U38"/>
<dbReference type="Antibodypedia" id="186">
    <property type="antibodies" value="73 antibodies from 15 providers"/>
</dbReference>
<dbReference type="Ensembl" id="ENSMUST00000022831.5">
    <property type="protein sequence ID" value="ENSMUSP00000022831.4"/>
    <property type="gene ID" value="ENSMUSG00000047153.5"/>
</dbReference>
<dbReference type="GeneID" id="219094"/>
<dbReference type="KEGG" id="mmu:219094"/>
<dbReference type="UCSC" id="uc007ubb.1">
    <property type="organism name" value="mouse"/>
</dbReference>
<dbReference type="AGR" id="MGI:2451333"/>
<dbReference type="CTD" id="23351"/>
<dbReference type="MGI" id="MGI:2451333">
    <property type="gene designation" value="Khnyn"/>
</dbReference>
<dbReference type="VEuPathDB" id="HostDB:ENSMUSG00000047153"/>
<dbReference type="eggNOG" id="KOG3777">
    <property type="taxonomic scope" value="Eukaryota"/>
</dbReference>
<dbReference type="GeneTree" id="ENSGT00940000161993"/>
<dbReference type="HOGENOM" id="CLU_014137_0_0_1"/>
<dbReference type="InParanoid" id="Q80U38"/>
<dbReference type="OMA" id="SCGYTEQ"/>
<dbReference type="OrthoDB" id="392925at2759"/>
<dbReference type="PhylomeDB" id="Q80U38"/>
<dbReference type="TreeFam" id="TF315783"/>
<dbReference type="BioGRID-ORCS" id="219094">
    <property type="hits" value="4 hits in 76 CRISPR screens"/>
</dbReference>
<dbReference type="ChiTaRS" id="Khnyn">
    <property type="organism name" value="mouse"/>
</dbReference>
<dbReference type="PRO" id="PR:Q80U38"/>
<dbReference type="Proteomes" id="UP000000589">
    <property type="component" value="Chromosome 14"/>
</dbReference>
<dbReference type="RNAct" id="Q80U38">
    <property type="molecule type" value="protein"/>
</dbReference>
<dbReference type="Bgee" id="ENSMUSG00000047153">
    <property type="expression patterns" value="Expressed in granulocyte and 219 other cell types or tissues"/>
</dbReference>
<dbReference type="ExpressionAtlas" id="Q80U38">
    <property type="expression patterns" value="baseline and differential"/>
</dbReference>
<dbReference type="CDD" id="cd09032">
    <property type="entry name" value="KH-I_N4BP1_like_rpt1"/>
    <property type="match status" value="1"/>
</dbReference>
<dbReference type="CDD" id="cd22477">
    <property type="entry name" value="KH-I_NYNRIN_like"/>
    <property type="match status" value="1"/>
</dbReference>
<dbReference type="FunFam" id="3.40.50.11980:FF:000001">
    <property type="entry name" value="ZC3H12A isoform 1"/>
    <property type="match status" value="1"/>
</dbReference>
<dbReference type="Gene3D" id="3.40.50.11980">
    <property type="match status" value="1"/>
</dbReference>
<dbReference type="InterPro" id="IPR056629">
    <property type="entry name" value="KH_N4BP1_1st"/>
</dbReference>
<dbReference type="InterPro" id="IPR056630">
    <property type="entry name" value="KH_N4BP1_2nd"/>
</dbReference>
<dbReference type="InterPro" id="IPR021869">
    <property type="entry name" value="RNase_Zc3h12_NYN"/>
</dbReference>
<dbReference type="InterPro" id="IPR056578">
    <property type="entry name" value="UBA_N4BP1_C"/>
</dbReference>
<dbReference type="InterPro" id="IPR051101">
    <property type="entry name" value="ZC3H12/N4BP1_RNase_Reg"/>
</dbReference>
<dbReference type="PANTHER" id="PTHR12876">
    <property type="entry name" value="N4BP1-RELATED"/>
    <property type="match status" value="1"/>
</dbReference>
<dbReference type="PANTHER" id="PTHR12876:SF28">
    <property type="entry name" value="PROTEIN KHNYN"/>
    <property type="match status" value="1"/>
</dbReference>
<dbReference type="Pfam" id="PF23050">
    <property type="entry name" value="KH_N4BP1_1st"/>
    <property type="match status" value="1"/>
</dbReference>
<dbReference type="Pfam" id="PF23052">
    <property type="entry name" value="KH_N4BP1_2nd"/>
    <property type="match status" value="1"/>
</dbReference>
<dbReference type="Pfam" id="PF11977">
    <property type="entry name" value="RNase_Zc3h12a"/>
    <property type="match status" value="1"/>
</dbReference>
<dbReference type="Pfam" id="PF23054">
    <property type="entry name" value="UBA_N4BP1_C"/>
    <property type="match status" value="1"/>
</dbReference>
<gene>
    <name type="primary">Khnyn</name>
    <name type="synonym">Kiaa0323</name>
</gene>
<name>KHNYN_MOUSE</name>
<reference key="1">
    <citation type="journal article" date="2005" name="Science">
        <title>The transcriptional landscape of the mammalian genome.</title>
        <authorList>
            <person name="Carninci P."/>
            <person name="Kasukawa T."/>
            <person name="Katayama S."/>
            <person name="Gough J."/>
            <person name="Frith M.C."/>
            <person name="Maeda N."/>
            <person name="Oyama R."/>
            <person name="Ravasi T."/>
            <person name="Lenhard B."/>
            <person name="Wells C."/>
            <person name="Kodzius R."/>
            <person name="Shimokawa K."/>
            <person name="Bajic V.B."/>
            <person name="Brenner S.E."/>
            <person name="Batalov S."/>
            <person name="Forrest A.R."/>
            <person name="Zavolan M."/>
            <person name="Davis M.J."/>
            <person name="Wilming L.G."/>
            <person name="Aidinis V."/>
            <person name="Allen J.E."/>
            <person name="Ambesi-Impiombato A."/>
            <person name="Apweiler R."/>
            <person name="Aturaliya R.N."/>
            <person name="Bailey T.L."/>
            <person name="Bansal M."/>
            <person name="Baxter L."/>
            <person name="Beisel K.W."/>
            <person name="Bersano T."/>
            <person name="Bono H."/>
            <person name="Chalk A.M."/>
            <person name="Chiu K.P."/>
            <person name="Choudhary V."/>
            <person name="Christoffels A."/>
            <person name="Clutterbuck D.R."/>
            <person name="Crowe M.L."/>
            <person name="Dalla E."/>
            <person name="Dalrymple B.P."/>
            <person name="de Bono B."/>
            <person name="Della Gatta G."/>
            <person name="di Bernardo D."/>
            <person name="Down T."/>
            <person name="Engstrom P."/>
            <person name="Fagiolini M."/>
            <person name="Faulkner G."/>
            <person name="Fletcher C.F."/>
            <person name="Fukushima T."/>
            <person name="Furuno M."/>
            <person name="Futaki S."/>
            <person name="Gariboldi M."/>
            <person name="Georgii-Hemming P."/>
            <person name="Gingeras T.R."/>
            <person name="Gojobori T."/>
            <person name="Green R.E."/>
            <person name="Gustincich S."/>
            <person name="Harbers M."/>
            <person name="Hayashi Y."/>
            <person name="Hensch T.K."/>
            <person name="Hirokawa N."/>
            <person name="Hill D."/>
            <person name="Huminiecki L."/>
            <person name="Iacono M."/>
            <person name="Ikeo K."/>
            <person name="Iwama A."/>
            <person name="Ishikawa T."/>
            <person name="Jakt M."/>
            <person name="Kanapin A."/>
            <person name="Katoh M."/>
            <person name="Kawasawa Y."/>
            <person name="Kelso J."/>
            <person name="Kitamura H."/>
            <person name="Kitano H."/>
            <person name="Kollias G."/>
            <person name="Krishnan S.P."/>
            <person name="Kruger A."/>
            <person name="Kummerfeld S.K."/>
            <person name="Kurochkin I.V."/>
            <person name="Lareau L.F."/>
            <person name="Lazarevic D."/>
            <person name="Lipovich L."/>
            <person name="Liu J."/>
            <person name="Liuni S."/>
            <person name="McWilliam S."/>
            <person name="Madan Babu M."/>
            <person name="Madera M."/>
            <person name="Marchionni L."/>
            <person name="Matsuda H."/>
            <person name="Matsuzawa S."/>
            <person name="Miki H."/>
            <person name="Mignone F."/>
            <person name="Miyake S."/>
            <person name="Morris K."/>
            <person name="Mottagui-Tabar S."/>
            <person name="Mulder N."/>
            <person name="Nakano N."/>
            <person name="Nakauchi H."/>
            <person name="Ng P."/>
            <person name="Nilsson R."/>
            <person name="Nishiguchi S."/>
            <person name="Nishikawa S."/>
            <person name="Nori F."/>
            <person name="Ohara O."/>
            <person name="Okazaki Y."/>
            <person name="Orlando V."/>
            <person name="Pang K.C."/>
            <person name="Pavan W.J."/>
            <person name="Pavesi G."/>
            <person name="Pesole G."/>
            <person name="Petrovsky N."/>
            <person name="Piazza S."/>
            <person name="Reed J."/>
            <person name="Reid J.F."/>
            <person name="Ring B.Z."/>
            <person name="Ringwald M."/>
            <person name="Rost B."/>
            <person name="Ruan Y."/>
            <person name="Salzberg S.L."/>
            <person name="Sandelin A."/>
            <person name="Schneider C."/>
            <person name="Schoenbach C."/>
            <person name="Sekiguchi K."/>
            <person name="Semple C.A."/>
            <person name="Seno S."/>
            <person name="Sessa L."/>
            <person name="Sheng Y."/>
            <person name="Shibata Y."/>
            <person name="Shimada H."/>
            <person name="Shimada K."/>
            <person name="Silva D."/>
            <person name="Sinclair B."/>
            <person name="Sperling S."/>
            <person name="Stupka E."/>
            <person name="Sugiura K."/>
            <person name="Sultana R."/>
            <person name="Takenaka Y."/>
            <person name="Taki K."/>
            <person name="Tammoja K."/>
            <person name="Tan S.L."/>
            <person name="Tang S."/>
            <person name="Taylor M.S."/>
            <person name="Tegner J."/>
            <person name="Teichmann S.A."/>
            <person name="Ueda H.R."/>
            <person name="van Nimwegen E."/>
            <person name="Verardo R."/>
            <person name="Wei C.L."/>
            <person name="Yagi K."/>
            <person name="Yamanishi H."/>
            <person name="Zabarovsky E."/>
            <person name="Zhu S."/>
            <person name="Zimmer A."/>
            <person name="Hide W."/>
            <person name="Bult C."/>
            <person name="Grimmond S.M."/>
            <person name="Teasdale R.D."/>
            <person name="Liu E.T."/>
            <person name="Brusic V."/>
            <person name="Quackenbush J."/>
            <person name="Wahlestedt C."/>
            <person name="Mattick J.S."/>
            <person name="Hume D.A."/>
            <person name="Kai C."/>
            <person name="Sasaki D."/>
            <person name="Tomaru Y."/>
            <person name="Fukuda S."/>
            <person name="Kanamori-Katayama M."/>
            <person name="Suzuki M."/>
            <person name="Aoki J."/>
            <person name="Arakawa T."/>
            <person name="Iida J."/>
            <person name="Imamura K."/>
            <person name="Itoh M."/>
            <person name="Kato T."/>
            <person name="Kawaji H."/>
            <person name="Kawagashira N."/>
            <person name="Kawashima T."/>
            <person name="Kojima M."/>
            <person name="Kondo S."/>
            <person name="Konno H."/>
            <person name="Nakano K."/>
            <person name="Ninomiya N."/>
            <person name="Nishio T."/>
            <person name="Okada M."/>
            <person name="Plessy C."/>
            <person name="Shibata K."/>
            <person name="Shiraki T."/>
            <person name="Suzuki S."/>
            <person name="Tagami M."/>
            <person name="Waki K."/>
            <person name="Watahiki A."/>
            <person name="Okamura-Oho Y."/>
            <person name="Suzuki H."/>
            <person name="Kawai J."/>
            <person name="Hayashizaki Y."/>
        </authorList>
    </citation>
    <scope>NUCLEOTIDE SEQUENCE [LARGE SCALE MRNA]</scope>
    <source>
        <strain>C57BL/6J</strain>
        <tissue>Cecum</tissue>
        <tissue>Head</tissue>
        <tissue>Medulla oblongata</tissue>
    </source>
</reference>
<reference key="2">
    <citation type="journal article" date="2003" name="DNA Res.">
        <title>Prediction of the coding sequences of mouse homologues of KIAA gene: II. The complete nucleotide sequences of 400 mouse KIAA-homologous cDNAs identified by screening of terminal sequences of cDNA clones randomly sampled from size-fractionated libraries.</title>
        <authorList>
            <person name="Okazaki N."/>
            <person name="Kikuno R."/>
            <person name="Ohara R."/>
            <person name="Inamoto S."/>
            <person name="Aizawa H."/>
            <person name="Yuasa S."/>
            <person name="Nakajima D."/>
            <person name="Nagase T."/>
            <person name="Ohara O."/>
            <person name="Koga H."/>
        </authorList>
    </citation>
    <scope>NUCLEOTIDE SEQUENCE [LARGE SCALE MRNA]</scope>
    <source>
        <tissue>Brain</tissue>
    </source>
</reference>
<reference key="3">
    <citation type="journal article" date="2004" name="Genome Res.">
        <title>The status, quality, and expansion of the NIH full-length cDNA project: the Mammalian Gene Collection (MGC).</title>
        <authorList>
            <consortium name="The MGC Project Team"/>
        </authorList>
    </citation>
    <scope>NUCLEOTIDE SEQUENCE [LARGE SCALE MRNA]</scope>
</reference>
<sequence length="671" mass="74565">MSTWGFASPTPDRFAVSAEAEDKVREQQTRLERIFNVGMSVLSKDCPENPHIWLQLEGPKENVCRAKEYLKGLCSPELQSEIHYPPRLHCIFLGAHGFFLDCLAWSTSAHLVPLLPGSLMISGLTEAFVMAQSRVEELVQRLSWDLQLQSCPGAPDNGGVLRDFSALLQTREDAYTEALLRLPLAVQEELLSLVQEASRGQGPSREVGSSGLLSPQFQGVRAPLNEGREFVGTRVAGSGKSPAVRGQSHTVEKEERKQDAVRDMGSGRKELSGEEVWEPGVAYRSQLAGGGAEEVAPLKGKASGKQEVPQQRGGFSVQGEPSGAHVPCQRAAPIRGASLLQRLHNGSASPPRVPSPPPAPEPPWPCGDRDRDRDRGDRGDKQQAGARGRGSPWKRGTRGGNLVTGTQRFQEALQDPFTLCLANVPGQPDLRHIVIDGSNVAMVHGLQHYFSSRGIALAVQYFWDRGHRDITVFVPQWRFSKDSKVRESHFLQKLYSLSLLSLTPSRVMDGKRISSYDDRFMVKLAEETDGIIVSNDQFRDLAEESDKWMAIIRERLLPFTFVGNLFMVPDDPLGRNGPTLDEFLKKPVRKQGSSKTQQPSKGSTEQANQQQGKDADRSNGGIRKTRETERLRRQLLEVFWGQDHKVDFILQREPYCRDINQLSEALLSLNF</sequence>
<feature type="chain" id="PRO_0000084291" description="Protein KHNYN">
    <location>
        <begin position="1"/>
        <end position="671"/>
    </location>
</feature>
<feature type="domain" description="RNase NYN" evidence="2">
    <location>
        <begin position="430"/>
        <end position="582"/>
    </location>
</feature>
<feature type="region of interest" description="Disordered" evidence="3">
    <location>
        <begin position="234"/>
        <end position="274"/>
    </location>
</feature>
<feature type="region of interest" description="Disordered" evidence="3">
    <location>
        <begin position="294"/>
        <end position="327"/>
    </location>
</feature>
<feature type="region of interest" description="Disordered" evidence="3">
    <location>
        <begin position="344"/>
        <end position="402"/>
    </location>
</feature>
<feature type="region of interest" description="Disordered" evidence="3">
    <location>
        <begin position="577"/>
        <end position="626"/>
    </location>
</feature>
<feature type="compositionally biased region" description="Basic and acidic residues" evidence="3">
    <location>
        <begin position="250"/>
        <end position="272"/>
    </location>
</feature>
<feature type="compositionally biased region" description="Pro residues" evidence="3">
    <location>
        <begin position="351"/>
        <end position="365"/>
    </location>
</feature>
<feature type="compositionally biased region" description="Basic and acidic residues" evidence="3">
    <location>
        <begin position="367"/>
        <end position="381"/>
    </location>
</feature>
<feature type="compositionally biased region" description="Polar residues" evidence="3">
    <location>
        <begin position="591"/>
        <end position="612"/>
    </location>
</feature>
<feature type="modified residue" description="Phosphoserine" evidence="1">
    <location>
        <position position="355"/>
    </location>
</feature>
<feature type="sequence conflict" description="In Ref. 1; BAC27665." evidence="4" ref="1">
    <original>S</original>
    <variation>G</variation>
    <location>
        <position position="106"/>
    </location>
</feature>
<feature type="sequence conflict" description="In Ref. 1; BAC27665." evidence="4" ref="1">
    <original>P</original>
    <variation>H</variation>
    <location>
        <position position="155"/>
    </location>
</feature>
<comment type="similarity">
    <text evidence="4">Belongs to the N4BP1 family.</text>
</comment>
<comment type="sequence caution" evidence="4">
    <conflict type="frameshift">
        <sequence resource="EMBL-CDS" id="BAC27665"/>
    </conflict>
</comment>
<comment type="sequence caution" evidence="4">
    <conflict type="erroneous initiation">
        <sequence resource="EMBL-CDS" id="BAC65529"/>
    </conflict>
</comment>
<accession>Q80U38</accession>
<accession>Q14B94</accession>
<accession>Q8BGJ6</accession>
<accession>Q8C082</accession>
<keyword id="KW-0597">Phosphoprotein</keyword>
<keyword id="KW-1185">Reference proteome</keyword>
<organism>
    <name type="scientific">Mus musculus</name>
    <name type="common">Mouse</name>
    <dbReference type="NCBI Taxonomy" id="10090"/>
    <lineage>
        <taxon>Eukaryota</taxon>
        <taxon>Metazoa</taxon>
        <taxon>Chordata</taxon>
        <taxon>Craniata</taxon>
        <taxon>Vertebrata</taxon>
        <taxon>Euteleostomi</taxon>
        <taxon>Mammalia</taxon>
        <taxon>Eutheria</taxon>
        <taxon>Euarchontoglires</taxon>
        <taxon>Glires</taxon>
        <taxon>Rodentia</taxon>
        <taxon>Myomorpha</taxon>
        <taxon>Muroidea</taxon>
        <taxon>Muridae</taxon>
        <taxon>Murinae</taxon>
        <taxon>Mus</taxon>
        <taxon>Mus</taxon>
    </lineage>
</organism>
<protein>
    <recommendedName>
        <fullName>Protein KHNYN</fullName>
    </recommendedName>
    <alternativeName>
        <fullName>KH and NYN domain-containing protein</fullName>
    </alternativeName>
</protein>